<gene>
    <name evidence="1" type="primary">pth</name>
    <name type="ordered locus">CE1011</name>
</gene>
<evidence type="ECO:0000255" key="1">
    <source>
        <dbReference type="HAMAP-Rule" id="MF_00083"/>
    </source>
</evidence>
<comment type="function">
    <text evidence="1">Hydrolyzes ribosome-free peptidyl-tRNAs (with 1 or more amino acids incorporated), which drop off the ribosome during protein synthesis, or as a result of ribosome stalling.</text>
</comment>
<comment type="function">
    <text evidence="1">Catalyzes the release of premature peptidyl moieties from peptidyl-tRNA molecules trapped in stalled 50S ribosomal subunits, and thus maintains levels of free tRNAs and 50S ribosomes.</text>
</comment>
<comment type="catalytic activity">
    <reaction evidence="1">
        <text>an N-acyl-L-alpha-aminoacyl-tRNA + H2O = an N-acyl-L-amino acid + a tRNA + H(+)</text>
        <dbReference type="Rhea" id="RHEA:54448"/>
        <dbReference type="Rhea" id="RHEA-COMP:10123"/>
        <dbReference type="Rhea" id="RHEA-COMP:13883"/>
        <dbReference type="ChEBI" id="CHEBI:15377"/>
        <dbReference type="ChEBI" id="CHEBI:15378"/>
        <dbReference type="ChEBI" id="CHEBI:59874"/>
        <dbReference type="ChEBI" id="CHEBI:78442"/>
        <dbReference type="ChEBI" id="CHEBI:138191"/>
        <dbReference type="EC" id="3.1.1.29"/>
    </reaction>
</comment>
<comment type="subunit">
    <text evidence="1">Monomer.</text>
</comment>
<comment type="subcellular location">
    <subcellularLocation>
        <location evidence="1">Cytoplasm</location>
    </subcellularLocation>
</comment>
<comment type="similarity">
    <text evidence="1">Belongs to the PTH family.</text>
</comment>
<proteinExistence type="inferred from homology"/>
<dbReference type="EC" id="3.1.1.29" evidence="1"/>
<dbReference type="EMBL" id="BA000035">
    <property type="protein sequence ID" value="BAC17821.1"/>
    <property type="molecule type" value="Genomic_DNA"/>
</dbReference>
<dbReference type="RefSeq" id="WP_006770025.1">
    <property type="nucleotide sequence ID" value="NC_004369.1"/>
</dbReference>
<dbReference type="SMR" id="Q8FQV6"/>
<dbReference type="STRING" id="196164.gene:10741417"/>
<dbReference type="KEGG" id="cef:CE1011"/>
<dbReference type="eggNOG" id="COG0193">
    <property type="taxonomic scope" value="Bacteria"/>
</dbReference>
<dbReference type="HOGENOM" id="CLU_062456_2_2_11"/>
<dbReference type="Proteomes" id="UP000001409">
    <property type="component" value="Chromosome"/>
</dbReference>
<dbReference type="GO" id="GO:0005737">
    <property type="term" value="C:cytoplasm"/>
    <property type="evidence" value="ECO:0007669"/>
    <property type="project" value="UniProtKB-SubCell"/>
</dbReference>
<dbReference type="GO" id="GO:0004045">
    <property type="term" value="F:peptidyl-tRNA hydrolase activity"/>
    <property type="evidence" value="ECO:0007669"/>
    <property type="project" value="UniProtKB-UniRule"/>
</dbReference>
<dbReference type="GO" id="GO:0000049">
    <property type="term" value="F:tRNA binding"/>
    <property type="evidence" value="ECO:0007669"/>
    <property type="project" value="UniProtKB-UniRule"/>
</dbReference>
<dbReference type="GO" id="GO:0006515">
    <property type="term" value="P:protein quality control for misfolded or incompletely synthesized proteins"/>
    <property type="evidence" value="ECO:0007669"/>
    <property type="project" value="UniProtKB-UniRule"/>
</dbReference>
<dbReference type="GO" id="GO:0072344">
    <property type="term" value="P:rescue of stalled ribosome"/>
    <property type="evidence" value="ECO:0007669"/>
    <property type="project" value="UniProtKB-UniRule"/>
</dbReference>
<dbReference type="CDD" id="cd00462">
    <property type="entry name" value="PTH"/>
    <property type="match status" value="1"/>
</dbReference>
<dbReference type="FunFam" id="3.40.50.1470:FF:000001">
    <property type="entry name" value="Peptidyl-tRNA hydrolase"/>
    <property type="match status" value="1"/>
</dbReference>
<dbReference type="Gene3D" id="3.40.50.1470">
    <property type="entry name" value="Peptidyl-tRNA hydrolase"/>
    <property type="match status" value="1"/>
</dbReference>
<dbReference type="HAMAP" id="MF_00083">
    <property type="entry name" value="Pept_tRNA_hydro_bact"/>
    <property type="match status" value="1"/>
</dbReference>
<dbReference type="InterPro" id="IPR001328">
    <property type="entry name" value="Pept_tRNA_hydro"/>
</dbReference>
<dbReference type="InterPro" id="IPR018171">
    <property type="entry name" value="Pept_tRNA_hydro_CS"/>
</dbReference>
<dbReference type="InterPro" id="IPR036416">
    <property type="entry name" value="Pept_tRNA_hydro_sf"/>
</dbReference>
<dbReference type="NCBIfam" id="TIGR00447">
    <property type="entry name" value="pth"/>
    <property type="match status" value="1"/>
</dbReference>
<dbReference type="PANTHER" id="PTHR17224">
    <property type="entry name" value="PEPTIDYL-TRNA HYDROLASE"/>
    <property type="match status" value="1"/>
</dbReference>
<dbReference type="PANTHER" id="PTHR17224:SF1">
    <property type="entry name" value="PEPTIDYL-TRNA HYDROLASE"/>
    <property type="match status" value="1"/>
</dbReference>
<dbReference type="Pfam" id="PF01195">
    <property type="entry name" value="Pept_tRNA_hydro"/>
    <property type="match status" value="1"/>
</dbReference>
<dbReference type="SUPFAM" id="SSF53178">
    <property type="entry name" value="Peptidyl-tRNA hydrolase-like"/>
    <property type="match status" value="1"/>
</dbReference>
<dbReference type="PROSITE" id="PS01195">
    <property type="entry name" value="PEPT_TRNA_HYDROL_1"/>
    <property type="match status" value="1"/>
</dbReference>
<dbReference type="PROSITE" id="PS01196">
    <property type="entry name" value="PEPT_TRNA_HYDROL_2"/>
    <property type="match status" value="1"/>
</dbReference>
<reference key="1">
    <citation type="journal article" date="2003" name="Genome Res.">
        <title>Comparative complete genome sequence analysis of the amino acid replacements responsible for the thermostability of Corynebacterium efficiens.</title>
        <authorList>
            <person name="Nishio Y."/>
            <person name="Nakamura Y."/>
            <person name="Kawarabayasi Y."/>
            <person name="Usuda Y."/>
            <person name="Kimura E."/>
            <person name="Sugimoto S."/>
            <person name="Matsui K."/>
            <person name="Yamagishi A."/>
            <person name="Kikuchi H."/>
            <person name="Ikeo K."/>
            <person name="Gojobori T."/>
        </authorList>
    </citation>
    <scope>NUCLEOTIDE SEQUENCE [LARGE SCALE GENOMIC DNA]</scope>
    <source>
        <strain>DSM 44549 / YS-314 / AJ 12310 / JCM 11189 / NBRC 100395</strain>
    </source>
</reference>
<feature type="chain" id="PRO_0000187726" description="Peptidyl-tRNA hydrolase">
    <location>
        <begin position="1"/>
        <end position="177"/>
    </location>
</feature>
<feature type="active site" description="Proton acceptor" evidence="1">
    <location>
        <position position="23"/>
    </location>
</feature>
<feature type="binding site" evidence="1">
    <location>
        <position position="18"/>
    </location>
    <ligand>
        <name>tRNA</name>
        <dbReference type="ChEBI" id="CHEBI:17843"/>
    </ligand>
</feature>
<feature type="binding site" evidence="1">
    <location>
        <position position="65"/>
    </location>
    <ligand>
        <name>tRNA</name>
        <dbReference type="ChEBI" id="CHEBI:17843"/>
    </ligand>
</feature>
<feature type="binding site" evidence="1">
    <location>
        <position position="67"/>
    </location>
    <ligand>
        <name>tRNA</name>
        <dbReference type="ChEBI" id="CHEBI:17843"/>
    </ligand>
</feature>
<feature type="binding site" evidence="1">
    <location>
        <position position="113"/>
    </location>
    <ligand>
        <name>tRNA</name>
        <dbReference type="ChEBI" id="CHEBI:17843"/>
    </ligand>
</feature>
<feature type="site" description="Discriminates between blocked and unblocked aminoacyl-tRNA" evidence="1">
    <location>
        <position position="13"/>
    </location>
</feature>
<feature type="site" description="Stabilizes the basic form of H active site to accept a proton" evidence="1">
    <location>
        <position position="92"/>
    </location>
</feature>
<name>PTH_COREF</name>
<protein>
    <recommendedName>
        <fullName evidence="1">Peptidyl-tRNA hydrolase</fullName>
        <shortName evidence="1">Pth</shortName>
        <ecNumber evidence="1">3.1.1.29</ecNumber>
    </recommendedName>
</protein>
<organism>
    <name type="scientific">Corynebacterium efficiens (strain DSM 44549 / YS-314 / AJ 12310 / JCM 11189 / NBRC 100395)</name>
    <dbReference type="NCBI Taxonomy" id="196164"/>
    <lineage>
        <taxon>Bacteria</taxon>
        <taxon>Bacillati</taxon>
        <taxon>Actinomycetota</taxon>
        <taxon>Actinomycetes</taxon>
        <taxon>Mycobacteriales</taxon>
        <taxon>Corynebacteriaceae</taxon>
        <taxon>Corynebacterium</taxon>
    </lineage>
</organism>
<accession>Q8FQV6</accession>
<sequence length="177" mass="19316">MNDSPVLVVGLGNPGPKYVGTRHNIGFEVVEELVGRNYANFSVHKRSNTEIAQLPGLIVAKPRSFMNLSGTPIRALCDFFKISPANVLVVHDELDLDFGQVKLRQGGGDHGHNGLKSTSRSLGTKDYWKLSVGIGRPPGRMDPATFVLKPFSKQEQDSVPIMAADAADLIEEHIRTL</sequence>
<keyword id="KW-0963">Cytoplasm</keyword>
<keyword id="KW-0378">Hydrolase</keyword>
<keyword id="KW-1185">Reference proteome</keyword>
<keyword id="KW-0694">RNA-binding</keyword>
<keyword id="KW-0820">tRNA-binding</keyword>